<organism>
    <name type="scientific">Parthenocissus quinquefolia</name>
    <name type="common">Virginia creeper</name>
    <name type="synonym">Hedera quinquefolia</name>
    <dbReference type="NCBI Taxonomy" id="3607"/>
    <lineage>
        <taxon>Eukaryota</taxon>
        <taxon>Viridiplantae</taxon>
        <taxon>Streptophyta</taxon>
        <taxon>Embryophyta</taxon>
        <taxon>Tracheophyta</taxon>
        <taxon>Spermatophyta</taxon>
        <taxon>Magnoliopsida</taxon>
        <taxon>eudicotyledons</taxon>
        <taxon>Gunneridae</taxon>
        <taxon>Pentapetalae</taxon>
        <taxon>rosids</taxon>
        <taxon>Vitales</taxon>
        <taxon>Vitaceae</taxon>
        <taxon>Parthenocisseae</taxon>
        <taxon>Parthenocissus</taxon>
    </lineage>
</organism>
<accession>P23473</accession>
<dbReference type="EC" id="3.2.1.14"/>
<dbReference type="EC" id="3.2.1.17"/>
<dbReference type="SMR" id="P23473"/>
<dbReference type="CAZy" id="GH18">
    <property type="family name" value="Glycoside Hydrolase Family 18"/>
</dbReference>
<dbReference type="GO" id="GO:0005576">
    <property type="term" value="C:extracellular region"/>
    <property type="evidence" value="ECO:0007669"/>
    <property type="project" value="UniProtKB-SubCell"/>
</dbReference>
<dbReference type="GO" id="GO:0008843">
    <property type="term" value="F:endochitinase activity"/>
    <property type="evidence" value="ECO:0007669"/>
    <property type="project" value="UniProtKB-EC"/>
</dbReference>
<dbReference type="GO" id="GO:0003796">
    <property type="term" value="F:lysozyme activity"/>
    <property type="evidence" value="ECO:0007669"/>
    <property type="project" value="UniProtKB-EC"/>
</dbReference>
<dbReference type="GO" id="GO:0006032">
    <property type="term" value="P:chitin catabolic process"/>
    <property type="evidence" value="ECO:0007669"/>
    <property type="project" value="UniProtKB-KW"/>
</dbReference>
<dbReference type="GO" id="GO:0000272">
    <property type="term" value="P:polysaccharide catabolic process"/>
    <property type="evidence" value="ECO:0007669"/>
    <property type="project" value="UniProtKB-KW"/>
</dbReference>
<dbReference type="Gene3D" id="3.20.20.80">
    <property type="entry name" value="Glycosidases"/>
    <property type="match status" value="1"/>
</dbReference>
<dbReference type="InterPro" id="IPR001223">
    <property type="entry name" value="Glyco_hydro18_cat"/>
</dbReference>
<dbReference type="InterPro" id="IPR017853">
    <property type="entry name" value="Glycoside_hydrolase_SF"/>
</dbReference>
<dbReference type="InterPro" id="IPR050542">
    <property type="entry name" value="Glycosyl_Hydrlase18_Chitinase"/>
</dbReference>
<dbReference type="PANTHER" id="PTHR45708:SF21">
    <property type="entry name" value="ACIDIC ENDOCHITINASE"/>
    <property type="match status" value="1"/>
</dbReference>
<dbReference type="PANTHER" id="PTHR45708">
    <property type="entry name" value="ENDOCHITINASE"/>
    <property type="match status" value="1"/>
</dbReference>
<dbReference type="SUPFAM" id="SSF51445">
    <property type="entry name" value="(Trans)glycosidases"/>
    <property type="match status" value="1"/>
</dbReference>
<dbReference type="PROSITE" id="PS51910">
    <property type="entry name" value="GH18_2"/>
    <property type="match status" value="1"/>
</dbReference>
<name>CHLY_PARTH</name>
<keyword id="KW-0119">Carbohydrate metabolism</keyword>
<keyword id="KW-0146">Chitin degradation</keyword>
<keyword id="KW-0903">Direct protein sequencing</keyword>
<keyword id="KW-0326">Glycosidase</keyword>
<keyword id="KW-0378">Hydrolase</keyword>
<keyword id="KW-0511">Multifunctional enzyme</keyword>
<keyword id="KW-0624">Polysaccharide degradation</keyword>
<keyword id="KW-0964">Secreted</keyword>
<reference key="1">
    <citation type="journal article" date="1987" name="Biochim. Biophys. Acta">
        <title>Purification and N-terminal amino-acid sequence of a basic lysozyme from Parthenocissus quinquifolia cultured in vitro.</title>
        <authorList>
            <person name="Bernasconi P."/>
            <person name="Locher R."/>
            <person name="Pilet P.E."/>
            <person name="Jolles J."/>
            <person name="Jolles P."/>
        </authorList>
    </citation>
    <scope>PROTEIN SEQUENCE</scope>
</reference>
<protein>
    <recommendedName>
        <fullName>Bifunctional chitinase/lysozyme</fullName>
    </recommendedName>
    <domain>
        <recommendedName>
            <fullName>Chitinase</fullName>
            <ecNumber>3.2.1.14</ecNumber>
        </recommendedName>
    </domain>
    <domain>
        <recommendedName>
            <fullName>Lysozyme</fullName>
            <ecNumber>3.2.1.17</ecNumber>
        </recommendedName>
    </domain>
</protein>
<proteinExistence type="evidence at protein level"/>
<comment type="function">
    <text>Bifunctional enzyme with lysozyme/chitinase activity.</text>
</comment>
<comment type="catalytic activity">
    <reaction>
        <text>Random endo-hydrolysis of N-acetyl-beta-D-glucosaminide (1-&gt;4)-beta-linkages in chitin and chitodextrins.</text>
        <dbReference type="EC" id="3.2.1.14"/>
    </reaction>
</comment>
<comment type="catalytic activity">
    <reaction>
        <text>Hydrolysis of (1-&gt;4)-beta-linkages between N-acetylmuramic acid and N-acetyl-D-glucosamine residues in a peptidoglycan and between N-acetyl-D-glucosamine residues in chitodextrins.</text>
        <dbReference type="EC" id="3.2.1.17"/>
    </reaction>
</comment>
<comment type="subcellular location">
    <subcellularLocation>
        <location>Secreted</location>
        <location>Extracellular space</location>
    </subcellularLocation>
</comment>
<comment type="similarity">
    <text evidence="2">Belongs to the glycosyl hydrolase 18 family. Chitinase class II subfamily.</text>
</comment>
<sequence length="47" mass="5040">GGIAIYWGQNGNEGTLTQTCNTGKYSYVNIAFLNKFGNGQTPEINLA</sequence>
<feature type="chain" id="PRO_0000077052" description="Bifunctional chitinase/lysozyme">
    <location>
        <begin position="1"/>
        <end position="47" status="greater than"/>
    </location>
</feature>
<feature type="domain" description="GH18" evidence="1">
    <location>
        <begin position="1"/>
        <end position="47" status="greater than"/>
    </location>
</feature>
<feature type="non-terminal residue">
    <location>
        <position position="47"/>
    </location>
</feature>
<evidence type="ECO:0000255" key="1">
    <source>
        <dbReference type="PROSITE-ProRule" id="PRU01258"/>
    </source>
</evidence>
<evidence type="ECO:0000305" key="2"/>